<feature type="chain" id="PRO_0000334745" description="Leucine--tRNA ligase">
    <location>
        <begin position="1"/>
        <end position="811"/>
    </location>
</feature>
<feature type="short sequence motif" description="'HIGH' region">
    <location>
        <begin position="38"/>
        <end position="49"/>
    </location>
</feature>
<feature type="short sequence motif" description="'KMSKS' region">
    <location>
        <begin position="570"/>
        <end position="574"/>
    </location>
</feature>
<feature type="binding site" evidence="1">
    <location>
        <position position="573"/>
    </location>
    <ligand>
        <name>ATP</name>
        <dbReference type="ChEBI" id="CHEBI:30616"/>
    </ligand>
</feature>
<comment type="catalytic activity">
    <reaction evidence="1">
        <text>tRNA(Leu) + L-leucine + ATP = L-leucyl-tRNA(Leu) + AMP + diphosphate</text>
        <dbReference type="Rhea" id="RHEA:11688"/>
        <dbReference type="Rhea" id="RHEA-COMP:9613"/>
        <dbReference type="Rhea" id="RHEA-COMP:9622"/>
        <dbReference type="ChEBI" id="CHEBI:30616"/>
        <dbReference type="ChEBI" id="CHEBI:33019"/>
        <dbReference type="ChEBI" id="CHEBI:57427"/>
        <dbReference type="ChEBI" id="CHEBI:78442"/>
        <dbReference type="ChEBI" id="CHEBI:78494"/>
        <dbReference type="ChEBI" id="CHEBI:456215"/>
        <dbReference type="EC" id="6.1.1.4"/>
    </reaction>
</comment>
<comment type="subcellular location">
    <subcellularLocation>
        <location evidence="1">Cytoplasm</location>
    </subcellularLocation>
</comment>
<comment type="similarity">
    <text evidence="1">Belongs to the class-I aminoacyl-tRNA synthetase family.</text>
</comment>
<organism>
    <name type="scientific">Clostridium kluyveri (strain ATCC 8527 / DSM 555 / NBRC 12016 / NCIMB 10680 / K1)</name>
    <dbReference type="NCBI Taxonomy" id="431943"/>
    <lineage>
        <taxon>Bacteria</taxon>
        <taxon>Bacillati</taxon>
        <taxon>Bacillota</taxon>
        <taxon>Clostridia</taxon>
        <taxon>Eubacteriales</taxon>
        <taxon>Clostridiaceae</taxon>
        <taxon>Clostridium</taxon>
    </lineage>
</organism>
<sequence>MYSTKTDKKWQQKWDQTNIYTFDEKKSSKKLYTLEMFSYPSGSNLHAGHWFNYAPVDSWARMKRMQGYNVFQPMGFDAFGLPAENYAIKTGIHPKDSTEKNIDTMEKQLKSMGAMFNWENEVVTCRPDYYKWNQWLFLQLYKHDLAYRKNAPVNWCPSCNTVLANEQVKEGECERCGTEVTKKDLTQWFFKITDYTEELLKDLDNIDWPEKTKAMQRHWMGKSTGTDVTFKVADSDIKFNVFTTRVDTLFGVTYVVISPENDLVDSVTKEEYKEEIEKYREAAKKQTDIERQSITREKTGVSTGSYAINPINGRKVPIWIGDYVLNTYGTGAVMAVPAHDERDFEFATKYKLPIERVIEGGSSLPYVEYGKMINSDKFNGLYTPEGKEAVTKELENIGLGSGKTNYRLRDWLVSRQRYWGTPIPIIYCKKCGTVPVPESDLPVELPYNVQFSPDGKSPLLKSEEFMNTTCPICGEPAKREADTLDTFVCSSWYYLRYADNKNTEKAFDKDKINKLLPVDMYVGGPEHACMHLLYARFITKALRDMGFLNFDEPFLSLRHQGLILGPDGQKMSKSKGNTISPDDCIQKYGSDVFRMYLMFGFDYAEGGAWNDDGIKSMSKFVDRIERIVGNIKELINSGKNFKNSMDAAEKELNYSRNYSIKSVSEDAGKFQFNTAIARIMEFTNSLYKYIQEDTKNISLLKDTILDFIKIIAPFAPHFAEEQWEVLGQKYSIFNEKWPEFDPKALVKEEVEIAIQINGKIKAKINIPTNLSDEQIKELSISNDNIKPLLEGKNIKKVIVVKGRLVNIVVKP</sequence>
<dbReference type="EC" id="6.1.1.4" evidence="1"/>
<dbReference type="EMBL" id="CP000673">
    <property type="protein sequence ID" value="EDK35595.1"/>
    <property type="molecule type" value="Genomic_DNA"/>
</dbReference>
<dbReference type="RefSeq" id="WP_012103927.1">
    <property type="nucleotide sequence ID" value="NC_009706.1"/>
</dbReference>
<dbReference type="SMR" id="A5N399"/>
<dbReference type="STRING" id="431943.CKL_3605"/>
<dbReference type="KEGG" id="ckl:CKL_3605"/>
<dbReference type="eggNOG" id="COG0495">
    <property type="taxonomic scope" value="Bacteria"/>
</dbReference>
<dbReference type="HOGENOM" id="CLU_004427_0_0_9"/>
<dbReference type="Proteomes" id="UP000002411">
    <property type="component" value="Chromosome"/>
</dbReference>
<dbReference type="GO" id="GO:0005829">
    <property type="term" value="C:cytosol"/>
    <property type="evidence" value="ECO:0007669"/>
    <property type="project" value="TreeGrafter"/>
</dbReference>
<dbReference type="GO" id="GO:0002161">
    <property type="term" value="F:aminoacyl-tRNA deacylase activity"/>
    <property type="evidence" value="ECO:0007669"/>
    <property type="project" value="InterPro"/>
</dbReference>
<dbReference type="GO" id="GO:0005524">
    <property type="term" value="F:ATP binding"/>
    <property type="evidence" value="ECO:0007669"/>
    <property type="project" value="UniProtKB-UniRule"/>
</dbReference>
<dbReference type="GO" id="GO:0004823">
    <property type="term" value="F:leucine-tRNA ligase activity"/>
    <property type="evidence" value="ECO:0007669"/>
    <property type="project" value="UniProtKB-UniRule"/>
</dbReference>
<dbReference type="GO" id="GO:0006429">
    <property type="term" value="P:leucyl-tRNA aminoacylation"/>
    <property type="evidence" value="ECO:0007669"/>
    <property type="project" value="UniProtKB-UniRule"/>
</dbReference>
<dbReference type="CDD" id="cd07958">
    <property type="entry name" value="Anticodon_Ia_Leu_BEm"/>
    <property type="match status" value="1"/>
</dbReference>
<dbReference type="CDD" id="cd00812">
    <property type="entry name" value="LeuRS_core"/>
    <property type="match status" value="1"/>
</dbReference>
<dbReference type="FunFam" id="1.10.730.10:FF:000002">
    <property type="entry name" value="Leucine--tRNA ligase"/>
    <property type="match status" value="1"/>
</dbReference>
<dbReference type="FunFam" id="3.40.50.620:FF:000003">
    <property type="entry name" value="Leucine--tRNA ligase"/>
    <property type="match status" value="1"/>
</dbReference>
<dbReference type="FunFam" id="3.40.50.620:FF:000056">
    <property type="entry name" value="Leucine--tRNA ligase"/>
    <property type="match status" value="1"/>
</dbReference>
<dbReference type="Gene3D" id="3.40.50.620">
    <property type="entry name" value="HUPs"/>
    <property type="match status" value="2"/>
</dbReference>
<dbReference type="Gene3D" id="1.10.730.10">
    <property type="entry name" value="Isoleucyl-tRNA Synthetase, Domain 1"/>
    <property type="match status" value="2"/>
</dbReference>
<dbReference type="HAMAP" id="MF_00049_B">
    <property type="entry name" value="Leu_tRNA_synth_B"/>
    <property type="match status" value="1"/>
</dbReference>
<dbReference type="InterPro" id="IPR002300">
    <property type="entry name" value="aa-tRNA-synth_Ia"/>
</dbReference>
<dbReference type="InterPro" id="IPR002302">
    <property type="entry name" value="Leu-tRNA-ligase"/>
</dbReference>
<dbReference type="InterPro" id="IPR025709">
    <property type="entry name" value="Leu_tRNA-synth_edit"/>
</dbReference>
<dbReference type="InterPro" id="IPR013155">
    <property type="entry name" value="M/V/L/I-tRNA-synth_anticd-bd"/>
</dbReference>
<dbReference type="InterPro" id="IPR015413">
    <property type="entry name" value="Methionyl/Leucyl_tRNA_Synth"/>
</dbReference>
<dbReference type="InterPro" id="IPR014729">
    <property type="entry name" value="Rossmann-like_a/b/a_fold"/>
</dbReference>
<dbReference type="InterPro" id="IPR009080">
    <property type="entry name" value="tRNAsynth_Ia_anticodon-bd"/>
</dbReference>
<dbReference type="InterPro" id="IPR009008">
    <property type="entry name" value="Val/Leu/Ile-tRNA-synth_edit"/>
</dbReference>
<dbReference type="NCBIfam" id="TIGR00396">
    <property type="entry name" value="leuS_bact"/>
    <property type="match status" value="1"/>
</dbReference>
<dbReference type="PANTHER" id="PTHR43740:SF2">
    <property type="entry name" value="LEUCINE--TRNA LIGASE, MITOCHONDRIAL"/>
    <property type="match status" value="1"/>
</dbReference>
<dbReference type="PANTHER" id="PTHR43740">
    <property type="entry name" value="LEUCYL-TRNA SYNTHETASE"/>
    <property type="match status" value="1"/>
</dbReference>
<dbReference type="Pfam" id="PF08264">
    <property type="entry name" value="Anticodon_1"/>
    <property type="match status" value="1"/>
</dbReference>
<dbReference type="Pfam" id="PF00133">
    <property type="entry name" value="tRNA-synt_1"/>
    <property type="match status" value="1"/>
</dbReference>
<dbReference type="Pfam" id="PF13603">
    <property type="entry name" value="tRNA-synt_1_2"/>
    <property type="match status" value="1"/>
</dbReference>
<dbReference type="Pfam" id="PF09334">
    <property type="entry name" value="tRNA-synt_1g"/>
    <property type="match status" value="1"/>
</dbReference>
<dbReference type="PRINTS" id="PR00985">
    <property type="entry name" value="TRNASYNTHLEU"/>
</dbReference>
<dbReference type="SUPFAM" id="SSF47323">
    <property type="entry name" value="Anticodon-binding domain of a subclass of class I aminoacyl-tRNA synthetases"/>
    <property type="match status" value="1"/>
</dbReference>
<dbReference type="SUPFAM" id="SSF52374">
    <property type="entry name" value="Nucleotidylyl transferase"/>
    <property type="match status" value="1"/>
</dbReference>
<dbReference type="SUPFAM" id="SSF50677">
    <property type="entry name" value="ValRS/IleRS/LeuRS editing domain"/>
    <property type="match status" value="1"/>
</dbReference>
<reference key="1">
    <citation type="journal article" date="2008" name="Proc. Natl. Acad. Sci. U.S.A.">
        <title>The genome of Clostridium kluyveri, a strict anaerobe with unique metabolic features.</title>
        <authorList>
            <person name="Seedorf H."/>
            <person name="Fricke W.F."/>
            <person name="Veith B."/>
            <person name="Brueggemann H."/>
            <person name="Liesegang H."/>
            <person name="Strittmatter A."/>
            <person name="Miethke M."/>
            <person name="Buckel W."/>
            <person name="Hinderberger J."/>
            <person name="Li F."/>
            <person name="Hagemeier C."/>
            <person name="Thauer R.K."/>
            <person name="Gottschalk G."/>
        </authorList>
    </citation>
    <scope>NUCLEOTIDE SEQUENCE [LARGE SCALE GENOMIC DNA]</scope>
    <source>
        <strain>ATCC 8527 / DSM 555 / NBRC 12016 / NCIMB 10680 / K1</strain>
    </source>
</reference>
<name>SYL_CLOK5</name>
<gene>
    <name evidence="1" type="primary">leuS</name>
    <name type="ordered locus">CKL_3605</name>
</gene>
<proteinExistence type="inferred from homology"/>
<evidence type="ECO:0000255" key="1">
    <source>
        <dbReference type="HAMAP-Rule" id="MF_00049"/>
    </source>
</evidence>
<accession>A5N399</accession>
<protein>
    <recommendedName>
        <fullName evidence="1">Leucine--tRNA ligase</fullName>
        <ecNumber evidence="1">6.1.1.4</ecNumber>
    </recommendedName>
    <alternativeName>
        <fullName evidence="1">Leucyl-tRNA synthetase</fullName>
        <shortName evidence="1">LeuRS</shortName>
    </alternativeName>
</protein>
<keyword id="KW-0030">Aminoacyl-tRNA synthetase</keyword>
<keyword id="KW-0067">ATP-binding</keyword>
<keyword id="KW-0963">Cytoplasm</keyword>
<keyword id="KW-0436">Ligase</keyword>
<keyword id="KW-0547">Nucleotide-binding</keyword>
<keyword id="KW-0648">Protein biosynthesis</keyword>
<keyword id="KW-1185">Reference proteome</keyword>